<proteinExistence type="inferred from homology"/>
<keyword id="KW-0963">Cytoplasm</keyword>
<keyword id="KW-0342">GTP-binding</keyword>
<keyword id="KW-0378">Hydrolase</keyword>
<keyword id="KW-0479">Metal-binding</keyword>
<keyword id="KW-0547">Nucleotide-binding</keyword>
<keyword id="KW-0690">Ribosome biogenesis</keyword>
<keyword id="KW-0694">RNA-binding</keyword>
<keyword id="KW-0699">rRNA-binding</keyword>
<keyword id="KW-0862">Zinc</keyword>
<gene>
    <name evidence="1" type="primary">rsgA</name>
    <name type="ordered locus">P9303_00231</name>
</gene>
<reference key="1">
    <citation type="journal article" date="2007" name="PLoS Genet.">
        <title>Patterns and implications of gene gain and loss in the evolution of Prochlorococcus.</title>
        <authorList>
            <person name="Kettler G.C."/>
            <person name="Martiny A.C."/>
            <person name="Huang K."/>
            <person name="Zucker J."/>
            <person name="Coleman M.L."/>
            <person name="Rodrigue S."/>
            <person name="Chen F."/>
            <person name="Lapidus A."/>
            <person name="Ferriera S."/>
            <person name="Johnson J."/>
            <person name="Steglich C."/>
            <person name="Church G.M."/>
            <person name="Richardson P."/>
            <person name="Chisholm S.W."/>
        </authorList>
    </citation>
    <scope>NUCLEOTIDE SEQUENCE [LARGE SCALE GENOMIC DNA]</scope>
    <source>
        <strain>MIT 9303</strain>
    </source>
</reference>
<comment type="function">
    <text evidence="1">One of several proteins that assist in the late maturation steps of the functional core of the 30S ribosomal subunit. Helps release RbfA from mature subunits. May play a role in the assembly of ribosomal proteins into the subunit. Circularly permuted GTPase that catalyzes slow GTP hydrolysis, GTPase activity is stimulated by the 30S ribosomal subunit.</text>
</comment>
<comment type="cofactor">
    <cofactor evidence="1">
        <name>Zn(2+)</name>
        <dbReference type="ChEBI" id="CHEBI:29105"/>
    </cofactor>
    <text evidence="1">Binds 1 zinc ion per subunit.</text>
</comment>
<comment type="subunit">
    <text evidence="1">Monomer. Associates with 30S ribosomal subunit, binds 16S rRNA.</text>
</comment>
<comment type="subcellular location">
    <subcellularLocation>
        <location evidence="1">Cytoplasm</location>
    </subcellularLocation>
</comment>
<comment type="similarity">
    <text evidence="1">Belongs to the TRAFAC class YlqF/YawG GTPase family. RsgA subfamily.</text>
</comment>
<dbReference type="EC" id="3.6.1.-" evidence="1"/>
<dbReference type="EMBL" id="CP000554">
    <property type="protein sequence ID" value="ABM76780.1"/>
    <property type="molecule type" value="Genomic_DNA"/>
</dbReference>
<dbReference type="RefSeq" id="WP_011824713.1">
    <property type="nucleotide sequence ID" value="NC_008820.1"/>
</dbReference>
<dbReference type="SMR" id="A2C5M0"/>
<dbReference type="STRING" id="59922.P9303_00231"/>
<dbReference type="KEGG" id="pmf:P9303_00231"/>
<dbReference type="HOGENOM" id="CLU_033617_2_1_3"/>
<dbReference type="BioCyc" id="PMAR59922:G1G80-24-MONOMER"/>
<dbReference type="Proteomes" id="UP000002274">
    <property type="component" value="Chromosome"/>
</dbReference>
<dbReference type="GO" id="GO:0005737">
    <property type="term" value="C:cytoplasm"/>
    <property type="evidence" value="ECO:0007669"/>
    <property type="project" value="UniProtKB-SubCell"/>
</dbReference>
<dbReference type="GO" id="GO:0005525">
    <property type="term" value="F:GTP binding"/>
    <property type="evidence" value="ECO:0007669"/>
    <property type="project" value="UniProtKB-UniRule"/>
</dbReference>
<dbReference type="GO" id="GO:0003924">
    <property type="term" value="F:GTPase activity"/>
    <property type="evidence" value="ECO:0007669"/>
    <property type="project" value="UniProtKB-UniRule"/>
</dbReference>
<dbReference type="GO" id="GO:0046872">
    <property type="term" value="F:metal ion binding"/>
    <property type="evidence" value="ECO:0007669"/>
    <property type="project" value="UniProtKB-KW"/>
</dbReference>
<dbReference type="GO" id="GO:0019843">
    <property type="term" value="F:rRNA binding"/>
    <property type="evidence" value="ECO:0007669"/>
    <property type="project" value="UniProtKB-KW"/>
</dbReference>
<dbReference type="GO" id="GO:0042274">
    <property type="term" value="P:ribosomal small subunit biogenesis"/>
    <property type="evidence" value="ECO:0007669"/>
    <property type="project" value="UniProtKB-UniRule"/>
</dbReference>
<dbReference type="CDD" id="cd01854">
    <property type="entry name" value="YjeQ_EngC"/>
    <property type="match status" value="1"/>
</dbReference>
<dbReference type="Gene3D" id="3.40.50.300">
    <property type="entry name" value="P-loop containing nucleotide triphosphate hydrolases"/>
    <property type="match status" value="1"/>
</dbReference>
<dbReference type="Gene3D" id="1.10.40.50">
    <property type="entry name" value="Probable gtpase engc, domain 3"/>
    <property type="match status" value="1"/>
</dbReference>
<dbReference type="HAMAP" id="MF_01820">
    <property type="entry name" value="GTPase_RsgA"/>
    <property type="match status" value="1"/>
</dbReference>
<dbReference type="InterPro" id="IPR030378">
    <property type="entry name" value="G_CP_dom"/>
</dbReference>
<dbReference type="InterPro" id="IPR012340">
    <property type="entry name" value="NA-bd_OB-fold"/>
</dbReference>
<dbReference type="InterPro" id="IPR027417">
    <property type="entry name" value="P-loop_NTPase"/>
</dbReference>
<dbReference type="InterPro" id="IPR004881">
    <property type="entry name" value="Ribosome_biogen_GTPase_RsgA"/>
</dbReference>
<dbReference type="InterPro" id="IPR010914">
    <property type="entry name" value="RsgA_GTPase_dom"/>
</dbReference>
<dbReference type="NCBIfam" id="TIGR00157">
    <property type="entry name" value="ribosome small subunit-dependent GTPase A"/>
    <property type="match status" value="1"/>
</dbReference>
<dbReference type="PANTHER" id="PTHR32120">
    <property type="entry name" value="SMALL RIBOSOMAL SUBUNIT BIOGENESIS GTPASE RSGA"/>
    <property type="match status" value="1"/>
</dbReference>
<dbReference type="PANTHER" id="PTHR32120:SF11">
    <property type="entry name" value="SMALL RIBOSOMAL SUBUNIT BIOGENESIS GTPASE RSGA 1, MITOCHONDRIAL-RELATED"/>
    <property type="match status" value="1"/>
</dbReference>
<dbReference type="Pfam" id="PF03193">
    <property type="entry name" value="RsgA_GTPase"/>
    <property type="match status" value="1"/>
</dbReference>
<dbReference type="SUPFAM" id="SSF50249">
    <property type="entry name" value="Nucleic acid-binding proteins"/>
    <property type="match status" value="1"/>
</dbReference>
<dbReference type="SUPFAM" id="SSF52540">
    <property type="entry name" value="P-loop containing nucleoside triphosphate hydrolases"/>
    <property type="match status" value="1"/>
</dbReference>
<dbReference type="PROSITE" id="PS50936">
    <property type="entry name" value="ENGC_GTPASE"/>
    <property type="match status" value="1"/>
</dbReference>
<dbReference type="PROSITE" id="PS51721">
    <property type="entry name" value="G_CP"/>
    <property type="match status" value="1"/>
</dbReference>
<organism>
    <name type="scientific">Prochlorococcus marinus (strain MIT 9303)</name>
    <dbReference type="NCBI Taxonomy" id="59922"/>
    <lineage>
        <taxon>Bacteria</taxon>
        <taxon>Bacillati</taxon>
        <taxon>Cyanobacteriota</taxon>
        <taxon>Cyanophyceae</taxon>
        <taxon>Synechococcales</taxon>
        <taxon>Prochlorococcaceae</taxon>
        <taxon>Prochlorococcus</taxon>
    </lineage>
</organism>
<accession>A2C5M0</accession>
<feature type="chain" id="PRO_1000188116" description="Small ribosomal subunit biogenesis GTPase RsgA">
    <location>
        <begin position="1"/>
        <end position="321"/>
    </location>
</feature>
<feature type="domain" description="CP-type G" evidence="2">
    <location>
        <begin position="89"/>
        <end position="248"/>
    </location>
</feature>
<feature type="binding site" evidence="1">
    <location>
        <begin position="138"/>
        <end position="141"/>
    </location>
    <ligand>
        <name>GTP</name>
        <dbReference type="ChEBI" id="CHEBI:37565"/>
    </ligand>
</feature>
<feature type="binding site" evidence="1">
    <location>
        <begin position="190"/>
        <end position="198"/>
    </location>
    <ligand>
        <name>GTP</name>
        <dbReference type="ChEBI" id="CHEBI:37565"/>
    </ligand>
</feature>
<feature type="binding site" evidence="1">
    <location>
        <position position="273"/>
    </location>
    <ligand>
        <name>Zn(2+)</name>
        <dbReference type="ChEBI" id="CHEBI:29105"/>
    </ligand>
</feature>
<feature type="binding site" evidence="1">
    <location>
        <position position="278"/>
    </location>
    <ligand>
        <name>Zn(2+)</name>
        <dbReference type="ChEBI" id="CHEBI:29105"/>
    </ligand>
</feature>
<feature type="binding site" evidence="1">
    <location>
        <position position="280"/>
    </location>
    <ligand>
        <name>Zn(2+)</name>
        <dbReference type="ChEBI" id="CHEBI:29105"/>
    </ligand>
</feature>
<feature type="binding site" evidence="1">
    <location>
        <position position="286"/>
    </location>
    <ligand>
        <name>Zn(2+)</name>
        <dbReference type="ChEBI" id="CHEBI:29105"/>
    </ligand>
</feature>
<sequence>MAAAEAPRLAGMVVALQANFLEVELETFNPSSLVSWRRSTDAEPLRLLCTRRTRLDHRGAAVHVGDRVWVEAIDWQERRAVVGDVEPRQSWINRPPVANVTAVVVALAVKQPCFDADQASRFLLSAEQTGVDVHLILTKRDLITSDQLEQQLVRLRGWGYRPMAVSVQTGEGLGALKNKLSSTRLAVFCGPSGVGKTSLLNQLLPQLSLRVGAVSGRLQRGRHTTRHVELFRLCEGSLVADTPGFNRPELPADPRKLAVLFPEFDGQIEDYPCRFRDCFHRDEPGCGVDKSWERYPIYKRFLEEMECLSRSSRGGSGSGLL</sequence>
<name>RSGA_PROM3</name>
<evidence type="ECO:0000255" key="1">
    <source>
        <dbReference type="HAMAP-Rule" id="MF_01820"/>
    </source>
</evidence>
<evidence type="ECO:0000255" key="2">
    <source>
        <dbReference type="PROSITE-ProRule" id="PRU01058"/>
    </source>
</evidence>
<protein>
    <recommendedName>
        <fullName evidence="1">Small ribosomal subunit biogenesis GTPase RsgA</fullName>
        <ecNumber evidence="1">3.6.1.-</ecNumber>
    </recommendedName>
</protein>